<gene>
    <name evidence="1" type="primary">mscL</name>
    <name type="ordered locus">VC_A0612</name>
</gene>
<comment type="function">
    <text evidence="1">Channel that opens in response to stretch forces in the membrane lipid bilayer. May participate in the regulation of osmotic pressure changes within the cell.</text>
</comment>
<comment type="subunit">
    <text evidence="1">Homopentamer.</text>
</comment>
<comment type="subcellular location">
    <subcellularLocation>
        <location evidence="1">Cell inner membrane</location>
        <topology evidence="1">Multi-pass membrane protein</topology>
    </subcellularLocation>
</comment>
<comment type="similarity">
    <text evidence="1">Belongs to the MscL family.</text>
</comment>
<evidence type="ECO:0000255" key="1">
    <source>
        <dbReference type="HAMAP-Rule" id="MF_00115"/>
    </source>
</evidence>
<reference key="1">
    <citation type="journal article" date="2000" name="Nature">
        <title>DNA sequence of both chromosomes of the cholera pathogen Vibrio cholerae.</title>
        <authorList>
            <person name="Heidelberg J.F."/>
            <person name="Eisen J.A."/>
            <person name="Nelson W.C."/>
            <person name="Clayton R.A."/>
            <person name="Gwinn M.L."/>
            <person name="Dodson R.J."/>
            <person name="Haft D.H."/>
            <person name="Hickey E.K."/>
            <person name="Peterson J.D."/>
            <person name="Umayam L.A."/>
            <person name="Gill S.R."/>
            <person name="Nelson K.E."/>
            <person name="Read T.D."/>
            <person name="Tettelin H."/>
            <person name="Richardson D.L."/>
            <person name="Ermolaeva M.D."/>
            <person name="Vamathevan J.J."/>
            <person name="Bass S."/>
            <person name="Qin H."/>
            <person name="Dragoi I."/>
            <person name="Sellers P."/>
            <person name="McDonald L.A."/>
            <person name="Utterback T.R."/>
            <person name="Fleischmann R.D."/>
            <person name="Nierman W.C."/>
            <person name="White O."/>
            <person name="Salzberg S.L."/>
            <person name="Smith H.O."/>
            <person name="Colwell R.R."/>
            <person name="Mekalanos J.J."/>
            <person name="Venter J.C."/>
            <person name="Fraser C.M."/>
        </authorList>
    </citation>
    <scope>NUCLEOTIDE SEQUENCE [LARGE SCALE GENOMIC DNA]</scope>
    <source>
        <strain>ATCC 39315 / El Tor Inaba N16961</strain>
    </source>
</reference>
<accession>Q9KLX9</accession>
<feature type="chain" id="PRO_0000192470" description="Large-conductance mechanosensitive channel">
    <location>
        <begin position="1"/>
        <end position="136"/>
    </location>
</feature>
<feature type="transmembrane region" description="Helical" evidence="1">
    <location>
        <begin position="9"/>
        <end position="29"/>
    </location>
</feature>
<feature type="transmembrane region" description="Helical" evidence="1">
    <location>
        <begin position="32"/>
        <end position="52"/>
    </location>
</feature>
<feature type="transmembrane region" description="Helical" evidence="1">
    <location>
        <begin position="54"/>
        <end position="74"/>
    </location>
</feature>
<feature type="transmembrane region" description="Helical" evidence="1">
    <location>
        <begin position="79"/>
        <end position="99"/>
    </location>
</feature>
<dbReference type="EMBL" id="AE003853">
    <property type="protein sequence ID" value="AAF96513.1"/>
    <property type="molecule type" value="Genomic_DNA"/>
</dbReference>
<dbReference type="PIR" id="H82438">
    <property type="entry name" value="H82438"/>
</dbReference>
<dbReference type="RefSeq" id="NP_233001.1">
    <property type="nucleotide sequence ID" value="NC_002506.1"/>
</dbReference>
<dbReference type="RefSeq" id="WP_000054763.1">
    <property type="nucleotide sequence ID" value="NZ_LT906615.1"/>
</dbReference>
<dbReference type="SMR" id="Q9KLX9"/>
<dbReference type="STRING" id="243277.VC_A0612"/>
<dbReference type="DNASU" id="2612883"/>
<dbReference type="EnsemblBacteria" id="AAF96513">
    <property type="protein sequence ID" value="AAF96513"/>
    <property type="gene ID" value="VC_A0612"/>
</dbReference>
<dbReference type="KEGG" id="vch:VC_A0612"/>
<dbReference type="PATRIC" id="fig|243277.26.peg.3240"/>
<dbReference type="eggNOG" id="COG1970">
    <property type="taxonomic scope" value="Bacteria"/>
</dbReference>
<dbReference type="HOGENOM" id="CLU_095787_0_0_6"/>
<dbReference type="Proteomes" id="UP000000584">
    <property type="component" value="Chromosome 2"/>
</dbReference>
<dbReference type="GO" id="GO:0016020">
    <property type="term" value="C:membrane"/>
    <property type="evidence" value="ECO:0000318"/>
    <property type="project" value="GO_Central"/>
</dbReference>
<dbReference type="GO" id="GO:0005886">
    <property type="term" value="C:plasma membrane"/>
    <property type="evidence" value="ECO:0007669"/>
    <property type="project" value="UniProtKB-SubCell"/>
</dbReference>
<dbReference type="GO" id="GO:0008381">
    <property type="term" value="F:mechanosensitive monoatomic ion channel activity"/>
    <property type="evidence" value="ECO:0000318"/>
    <property type="project" value="GO_Central"/>
</dbReference>
<dbReference type="GO" id="GO:0006811">
    <property type="term" value="P:monoatomic ion transport"/>
    <property type="evidence" value="ECO:0000318"/>
    <property type="project" value="GO_Central"/>
</dbReference>
<dbReference type="FunFam" id="1.10.1200.120:FF:000001">
    <property type="entry name" value="Large-conductance mechanosensitive channel"/>
    <property type="match status" value="1"/>
</dbReference>
<dbReference type="Gene3D" id="1.10.1200.120">
    <property type="entry name" value="Large-conductance mechanosensitive channel, MscL, domain 1"/>
    <property type="match status" value="1"/>
</dbReference>
<dbReference type="HAMAP" id="MF_00115">
    <property type="entry name" value="MscL"/>
    <property type="match status" value="1"/>
</dbReference>
<dbReference type="InterPro" id="IPR019823">
    <property type="entry name" value="Mechanosensitive_channel_CS"/>
</dbReference>
<dbReference type="InterPro" id="IPR001185">
    <property type="entry name" value="MS_channel"/>
</dbReference>
<dbReference type="InterPro" id="IPR037673">
    <property type="entry name" value="MSC/AndL"/>
</dbReference>
<dbReference type="InterPro" id="IPR036019">
    <property type="entry name" value="MscL_channel"/>
</dbReference>
<dbReference type="NCBIfam" id="TIGR00220">
    <property type="entry name" value="mscL"/>
    <property type="match status" value="1"/>
</dbReference>
<dbReference type="NCBIfam" id="NF001843">
    <property type="entry name" value="PRK00567.1-4"/>
    <property type="match status" value="1"/>
</dbReference>
<dbReference type="PANTHER" id="PTHR30266:SF2">
    <property type="entry name" value="LARGE-CONDUCTANCE MECHANOSENSITIVE CHANNEL"/>
    <property type="match status" value="1"/>
</dbReference>
<dbReference type="PANTHER" id="PTHR30266">
    <property type="entry name" value="MECHANOSENSITIVE CHANNEL MSCL"/>
    <property type="match status" value="1"/>
</dbReference>
<dbReference type="Pfam" id="PF01741">
    <property type="entry name" value="MscL"/>
    <property type="match status" value="1"/>
</dbReference>
<dbReference type="PRINTS" id="PR01264">
    <property type="entry name" value="MECHCHANNEL"/>
</dbReference>
<dbReference type="SUPFAM" id="SSF81330">
    <property type="entry name" value="Gated mechanosensitive channel"/>
    <property type="match status" value="1"/>
</dbReference>
<dbReference type="PROSITE" id="PS01327">
    <property type="entry name" value="MSCL"/>
    <property type="match status" value="1"/>
</dbReference>
<organism>
    <name type="scientific">Vibrio cholerae serotype O1 (strain ATCC 39315 / El Tor Inaba N16961)</name>
    <dbReference type="NCBI Taxonomy" id="243277"/>
    <lineage>
        <taxon>Bacteria</taxon>
        <taxon>Pseudomonadati</taxon>
        <taxon>Pseudomonadota</taxon>
        <taxon>Gammaproteobacteria</taxon>
        <taxon>Vibrionales</taxon>
        <taxon>Vibrionaceae</taxon>
        <taxon>Vibrio</taxon>
    </lineage>
</organism>
<protein>
    <recommendedName>
        <fullName evidence="1">Large-conductance mechanosensitive channel</fullName>
    </recommendedName>
</protein>
<proteinExistence type="inferred from homology"/>
<keyword id="KW-0997">Cell inner membrane</keyword>
<keyword id="KW-1003">Cell membrane</keyword>
<keyword id="KW-0407">Ion channel</keyword>
<keyword id="KW-0406">Ion transport</keyword>
<keyword id="KW-0472">Membrane</keyword>
<keyword id="KW-1185">Reference proteome</keyword>
<keyword id="KW-0812">Transmembrane</keyword>
<keyword id="KW-1133">Transmembrane helix</keyword>
<keyword id="KW-0813">Transport</keyword>
<sequence>MSLLKEFKAFASRGNVIDMAVGIIIGAAFGKIVSSFVADIIMPPIGIILGGVNFSDLSFVLLAAQGDAPAVVIAYGKFIQTVVDFTIIAFAIFMGLKAINSLKRKEEEAPKAPPAPTKDQELLSEIRDLLKAQQDK</sequence>
<name>MSCL_VIBCH</name>